<keyword id="KW-0004">4Fe-4S</keyword>
<keyword id="KW-0963">Cytoplasm</keyword>
<keyword id="KW-0408">Iron</keyword>
<keyword id="KW-0411">Iron-sulfur</keyword>
<keyword id="KW-0479">Metal-binding</keyword>
<keyword id="KW-0662">Pyridine nucleotide biosynthesis</keyword>
<keyword id="KW-1185">Reference proteome</keyword>
<keyword id="KW-0808">Transferase</keyword>
<name>NADA_EHRCR</name>
<dbReference type="EC" id="2.5.1.72" evidence="1"/>
<dbReference type="EMBL" id="U90899">
    <property type="protein sequence ID" value="AAB50414.1"/>
    <property type="molecule type" value="Genomic_DNA"/>
</dbReference>
<dbReference type="EMBL" id="CP000236">
    <property type="protein sequence ID" value="ABD44766.1"/>
    <property type="molecule type" value="Genomic_DNA"/>
</dbReference>
<dbReference type="RefSeq" id="WP_006010250.1">
    <property type="nucleotide sequence ID" value="NC_007799.1"/>
</dbReference>
<dbReference type="SMR" id="O05104"/>
<dbReference type="STRING" id="205920.ECH_0036"/>
<dbReference type="KEGG" id="ech:ECH_0036"/>
<dbReference type="eggNOG" id="COG0379">
    <property type="taxonomic scope" value="Bacteria"/>
</dbReference>
<dbReference type="HOGENOM" id="CLU_047382_1_0_5"/>
<dbReference type="OrthoDB" id="9801204at2"/>
<dbReference type="UniPathway" id="UPA00253">
    <property type="reaction ID" value="UER00327"/>
</dbReference>
<dbReference type="Proteomes" id="UP000008320">
    <property type="component" value="Chromosome"/>
</dbReference>
<dbReference type="GO" id="GO:0005829">
    <property type="term" value="C:cytosol"/>
    <property type="evidence" value="ECO:0007669"/>
    <property type="project" value="TreeGrafter"/>
</dbReference>
<dbReference type="GO" id="GO:0051539">
    <property type="term" value="F:4 iron, 4 sulfur cluster binding"/>
    <property type="evidence" value="ECO:0007669"/>
    <property type="project" value="UniProtKB-KW"/>
</dbReference>
<dbReference type="GO" id="GO:0046872">
    <property type="term" value="F:metal ion binding"/>
    <property type="evidence" value="ECO:0007669"/>
    <property type="project" value="UniProtKB-KW"/>
</dbReference>
<dbReference type="GO" id="GO:0008987">
    <property type="term" value="F:quinolinate synthetase A activity"/>
    <property type="evidence" value="ECO:0007669"/>
    <property type="project" value="UniProtKB-UniRule"/>
</dbReference>
<dbReference type="GO" id="GO:0034628">
    <property type="term" value="P:'de novo' NAD biosynthetic process from L-aspartate"/>
    <property type="evidence" value="ECO:0007669"/>
    <property type="project" value="TreeGrafter"/>
</dbReference>
<dbReference type="Gene3D" id="3.40.50.10800">
    <property type="entry name" value="NadA-like"/>
    <property type="match status" value="3"/>
</dbReference>
<dbReference type="HAMAP" id="MF_00568">
    <property type="entry name" value="NadA_type2"/>
    <property type="match status" value="1"/>
</dbReference>
<dbReference type="InterPro" id="IPR003473">
    <property type="entry name" value="NadA"/>
</dbReference>
<dbReference type="InterPro" id="IPR036094">
    <property type="entry name" value="NadA_sf"/>
</dbReference>
<dbReference type="InterPro" id="IPR023066">
    <property type="entry name" value="Quinolinate_synth_type2"/>
</dbReference>
<dbReference type="NCBIfam" id="TIGR00550">
    <property type="entry name" value="nadA"/>
    <property type="match status" value="1"/>
</dbReference>
<dbReference type="NCBIfam" id="NF006878">
    <property type="entry name" value="PRK09375.1-2"/>
    <property type="match status" value="1"/>
</dbReference>
<dbReference type="PANTHER" id="PTHR30573:SF0">
    <property type="entry name" value="QUINOLINATE SYNTHASE, CHLOROPLASTIC"/>
    <property type="match status" value="1"/>
</dbReference>
<dbReference type="PANTHER" id="PTHR30573">
    <property type="entry name" value="QUINOLINATE SYNTHETASE A"/>
    <property type="match status" value="1"/>
</dbReference>
<dbReference type="Pfam" id="PF02445">
    <property type="entry name" value="NadA"/>
    <property type="match status" value="1"/>
</dbReference>
<dbReference type="SUPFAM" id="SSF142754">
    <property type="entry name" value="NadA-like"/>
    <property type="match status" value="1"/>
</dbReference>
<protein>
    <recommendedName>
        <fullName evidence="1">Quinolinate synthase</fullName>
        <ecNumber evidence="1">2.5.1.72</ecNumber>
    </recommendedName>
</protein>
<comment type="function">
    <text evidence="1">Catalyzes the condensation of iminoaspartate with dihydroxyacetone phosphate to form quinolinate.</text>
</comment>
<comment type="catalytic activity">
    <reaction evidence="1">
        <text>iminosuccinate + dihydroxyacetone phosphate = quinolinate + phosphate + 2 H2O + H(+)</text>
        <dbReference type="Rhea" id="RHEA:25888"/>
        <dbReference type="ChEBI" id="CHEBI:15377"/>
        <dbReference type="ChEBI" id="CHEBI:15378"/>
        <dbReference type="ChEBI" id="CHEBI:29959"/>
        <dbReference type="ChEBI" id="CHEBI:43474"/>
        <dbReference type="ChEBI" id="CHEBI:57642"/>
        <dbReference type="ChEBI" id="CHEBI:77875"/>
        <dbReference type="EC" id="2.5.1.72"/>
    </reaction>
    <physiologicalReaction direction="left-to-right" evidence="1">
        <dbReference type="Rhea" id="RHEA:25889"/>
    </physiologicalReaction>
</comment>
<comment type="cofactor">
    <cofactor evidence="1">
        <name>[4Fe-4S] cluster</name>
        <dbReference type="ChEBI" id="CHEBI:49883"/>
    </cofactor>
    <text evidence="1">Binds 1 [4Fe-4S] cluster per subunit.</text>
</comment>
<comment type="pathway">
    <text evidence="1">Cofactor biosynthesis; NAD(+) biosynthesis; quinolinate from iminoaspartate: step 1/1.</text>
</comment>
<comment type="subcellular location">
    <subcellularLocation>
        <location evidence="1">Cytoplasm</location>
    </subcellularLocation>
</comment>
<comment type="similarity">
    <text evidence="1">Belongs to the quinolinate synthase family. Type 2 subfamily.</text>
</comment>
<evidence type="ECO:0000255" key="1">
    <source>
        <dbReference type="HAMAP-Rule" id="MF_00568"/>
    </source>
</evidence>
<evidence type="ECO:0000305" key="2"/>
<gene>
    <name evidence="1" type="primary">nadA</name>
    <name type="ordered locus">ECH_0036</name>
</gene>
<organism>
    <name type="scientific">Ehrlichia chaffeensis (strain ATCC CRL-10679 / Arkansas)</name>
    <dbReference type="NCBI Taxonomy" id="205920"/>
    <lineage>
        <taxon>Bacteria</taxon>
        <taxon>Pseudomonadati</taxon>
        <taxon>Pseudomonadota</taxon>
        <taxon>Alphaproteobacteria</taxon>
        <taxon>Rickettsiales</taxon>
        <taxon>Anaplasmataceae</taxon>
        <taxon>Ehrlichia</taxon>
    </lineage>
</organism>
<reference key="1">
    <citation type="journal article" date="1997" name="FEMS Microbiol. Lett.">
        <title>Sequence and characterization of an Ehrlichia chaffeensis gene encoding 314 amino acids highly homologous to the NAD A enzyme.</title>
        <authorList>
            <person name="Yu X.J."/>
            <person name="Walker D.H."/>
        </authorList>
    </citation>
    <scope>NUCLEOTIDE SEQUENCE [GENOMIC DNA]</scope>
</reference>
<reference key="2">
    <citation type="journal article" date="2006" name="PLoS Genet.">
        <title>Comparative genomics of emerging human ehrlichiosis agents.</title>
        <authorList>
            <person name="Dunning Hotopp J.C."/>
            <person name="Lin M."/>
            <person name="Madupu R."/>
            <person name="Crabtree J."/>
            <person name="Angiuoli S.V."/>
            <person name="Eisen J.A."/>
            <person name="Seshadri R."/>
            <person name="Ren Q."/>
            <person name="Wu M."/>
            <person name="Utterback T.R."/>
            <person name="Smith S."/>
            <person name="Lewis M."/>
            <person name="Khouri H."/>
            <person name="Zhang C."/>
            <person name="Niu H."/>
            <person name="Lin Q."/>
            <person name="Ohashi N."/>
            <person name="Zhi N."/>
            <person name="Nelson W.C."/>
            <person name="Brinkac L.M."/>
            <person name="Dodson R.J."/>
            <person name="Rosovitz M.J."/>
            <person name="Sundaram J.P."/>
            <person name="Daugherty S.C."/>
            <person name="Davidsen T."/>
            <person name="Durkin A.S."/>
            <person name="Gwinn M.L."/>
            <person name="Haft D.H."/>
            <person name="Selengut J.D."/>
            <person name="Sullivan S.A."/>
            <person name="Zafar N."/>
            <person name="Zhou L."/>
            <person name="Benahmed F."/>
            <person name="Forberger H."/>
            <person name="Halpin R."/>
            <person name="Mulligan S."/>
            <person name="Robinson J."/>
            <person name="White O."/>
            <person name="Rikihisa Y."/>
            <person name="Tettelin H."/>
        </authorList>
    </citation>
    <scope>NUCLEOTIDE SEQUENCE [LARGE SCALE GENOMIC DNA]</scope>
    <source>
        <strain>ATCC CRL-10679 / Arkansas</strain>
    </source>
</reference>
<proteinExistence type="inferred from homology"/>
<accession>O05104</accession>
<accession>Q2GI64</accession>
<sequence length="314" mass="35178">MKELDVITLLQEIRHLAQESNAVILAHYYQDSEIQDIADFIGDSLELSRKAATTTADVIVFCGVYFMAEVAKIINPAKKVLLPDLNAGCSLADSCDAESFKKFRELHKDCVSITYINSLAEVKAYSDIICTSSSAEKIIRQIPEEKQILFAPDKFLGAFLEKKTNRKMILWPGTCIVHESFSERELIDMMVRHDKAYVLAHPECPGHLLKYAHFIGSTTQLLKFSSDNPNSEFIVLTEEGIIHQMKKVSSGSTFYIVKTSDSGGCVSCSKCPHMRLNTLEKLYLCLKNGYPEITLDPEISSMAKRSLDAMLKMS</sequence>
<feature type="chain" id="PRO_0000155786" description="Quinolinate synthase">
    <location>
        <begin position="1"/>
        <end position="314"/>
    </location>
</feature>
<feature type="binding site" evidence="1">
    <location>
        <position position="27"/>
    </location>
    <ligand>
        <name>iminosuccinate</name>
        <dbReference type="ChEBI" id="CHEBI:77875"/>
    </ligand>
</feature>
<feature type="binding site" evidence="1">
    <location>
        <position position="44"/>
    </location>
    <ligand>
        <name>iminosuccinate</name>
        <dbReference type="ChEBI" id="CHEBI:77875"/>
    </ligand>
</feature>
<feature type="binding site" evidence="1">
    <location>
        <position position="89"/>
    </location>
    <ligand>
        <name>[4Fe-4S] cluster</name>
        <dbReference type="ChEBI" id="CHEBI:49883"/>
    </ligand>
</feature>
<feature type="binding site" evidence="1">
    <location>
        <begin position="115"/>
        <end position="117"/>
    </location>
    <ligand>
        <name>iminosuccinate</name>
        <dbReference type="ChEBI" id="CHEBI:77875"/>
    </ligand>
</feature>
<feature type="binding site" evidence="1">
    <location>
        <position position="132"/>
    </location>
    <ligand>
        <name>iminosuccinate</name>
        <dbReference type="ChEBI" id="CHEBI:77875"/>
    </ligand>
</feature>
<feature type="binding site" evidence="1">
    <location>
        <position position="175"/>
    </location>
    <ligand>
        <name>[4Fe-4S] cluster</name>
        <dbReference type="ChEBI" id="CHEBI:49883"/>
    </ligand>
</feature>
<feature type="binding site" evidence="1">
    <location>
        <begin position="201"/>
        <end position="203"/>
    </location>
    <ligand>
        <name>iminosuccinate</name>
        <dbReference type="ChEBI" id="CHEBI:77875"/>
    </ligand>
</feature>
<feature type="binding site" evidence="1">
    <location>
        <position position="218"/>
    </location>
    <ligand>
        <name>iminosuccinate</name>
        <dbReference type="ChEBI" id="CHEBI:77875"/>
    </ligand>
</feature>
<feature type="binding site" evidence="1">
    <location>
        <position position="271"/>
    </location>
    <ligand>
        <name>[4Fe-4S] cluster</name>
        <dbReference type="ChEBI" id="CHEBI:49883"/>
    </ligand>
</feature>
<feature type="sequence conflict" description="In Ref. 1; AAB50414." evidence="2" ref="1">
    <original>S</original>
    <variation>T</variation>
    <location>
        <position position="132"/>
    </location>
</feature>
<feature type="sequence conflict" description="In Ref. 1; AAB50414." evidence="2" ref="1">
    <original>D</original>
    <variation>E</variation>
    <location>
        <position position="296"/>
    </location>
</feature>